<keyword id="KW-0687">Ribonucleoprotein</keyword>
<keyword id="KW-0689">Ribosomal protein</keyword>
<keyword id="KW-0694">RNA-binding</keyword>
<keyword id="KW-0699">rRNA-binding</keyword>
<keyword id="KW-0820">tRNA-binding</keyword>
<organism>
    <name type="scientific">Acinetobacter baylyi (strain ATCC 33305 / BD413 / ADP1)</name>
    <dbReference type="NCBI Taxonomy" id="62977"/>
    <lineage>
        <taxon>Bacteria</taxon>
        <taxon>Pseudomonadati</taxon>
        <taxon>Pseudomonadota</taxon>
        <taxon>Gammaproteobacteria</taxon>
        <taxon>Moraxellales</taxon>
        <taxon>Moraxellaceae</taxon>
        <taxon>Acinetobacter</taxon>
    </lineage>
</organism>
<gene>
    <name evidence="1" type="primary">rpsG</name>
    <name type="ordered locus">ACIAD0883</name>
</gene>
<reference key="1">
    <citation type="journal article" date="2004" name="Nucleic Acids Res.">
        <title>Unique features revealed by the genome sequence of Acinetobacter sp. ADP1, a versatile and naturally transformation competent bacterium.</title>
        <authorList>
            <person name="Barbe V."/>
            <person name="Vallenet D."/>
            <person name="Fonknechten N."/>
            <person name="Kreimeyer A."/>
            <person name="Oztas S."/>
            <person name="Labarre L."/>
            <person name="Cruveiller S."/>
            <person name="Robert C."/>
            <person name="Duprat S."/>
            <person name="Wincker P."/>
            <person name="Ornston L.N."/>
            <person name="Weissenbach J."/>
            <person name="Marliere P."/>
            <person name="Cohen G.N."/>
            <person name="Medigue C."/>
        </authorList>
    </citation>
    <scope>NUCLEOTIDE SEQUENCE [LARGE SCALE GENOMIC DNA]</scope>
    <source>
        <strain>ATCC 33305 / BD413 / ADP1</strain>
    </source>
</reference>
<sequence>MPRRRVVAAREILPDPKFSSQTIAKFMNHVMQDGKKSVAEGIVYGALERVQEKNKVDPVEFFEATLEKVRPMVEVKARRVGGATYQVPMEVRPSRRTALAMRWLVDAAAKRSEKTMALRLAGELLDAAEGKGAAIKKREDVHRMAEANKAFSHYRF</sequence>
<feature type="chain" id="PRO_0000124203" description="Small ribosomal subunit protein uS7">
    <location>
        <begin position="1"/>
        <end position="156"/>
    </location>
</feature>
<proteinExistence type="inferred from homology"/>
<dbReference type="EMBL" id="CR543861">
    <property type="protein sequence ID" value="CAG67781.1"/>
    <property type="molecule type" value="Genomic_DNA"/>
</dbReference>
<dbReference type="RefSeq" id="WP_004750610.1">
    <property type="nucleotide sequence ID" value="NC_005966.1"/>
</dbReference>
<dbReference type="SMR" id="Q6FDS7"/>
<dbReference type="STRING" id="202950.GCA_001485005_02631"/>
<dbReference type="GeneID" id="67510379"/>
<dbReference type="KEGG" id="aci:ACIAD0883"/>
<dbReference type="eggNOG" id="COG0049">
    <property type="taxonomic scope" value="Bacteria"/>
</dbReference>
<dbReference type="HOGENOM" id="CLU_072226_1_1_6"/>
<dbReference type="OrthoDB" id="9807653at2"/>
<dbReference type="BioCyc" id="ASP62977:ACIAD_RS04075-MONOMER"/>
<dbReference type="Proteomes" id="UP000000430">
    <property type="component" value="Chromosome"/>
</dbReference>
<dbReference type="GO" id="GO:0015935">
    <property type="term" value="C:small ribosomal subunit"/>
    <property type="evidence" value="ECO:0007669"/>
    <property type="project" value="InterPro"/>
</dbReference>
<dbReference type="GO" id="GO:0019843">
    <property type="term" value="F:rRNA binding"/>
    <property type="evidence" value="ECO:0007669"/>
    <property type="project" value="UniProtKB-UniRule"/>
</dbReference>
<dbReference type="GO" id="GO:0003735">
    <property type="term" value="F:structural constituent of ribosome"/>
    <property type="evidence" value="ECO:0007669"/>
    <property type="project" value="InterPro"/>
</dbReference>
<dbReference type="GO" id="GO:0000049">
    <property type="term" value="F:tRNA binding"/>
    <property type="evidence" value="ECO:0007669"/>
    <property type="project" value="UniProtKB-UniRule"/>
</dbReference>
<dbReference type="GO" id="GO:0006412">
    <property type="term" value="P:translation"/>
    <property type="evidence" value="ECO:0007669"/>
    <property type="project" value="UniProtKB-UniRule"/>
</dbReference>
<dbReference type="CDD" id="cd14869">
    <property type="entry name" value="uS7_Bacteria"/>
    <property type="match status" value="1"/>
</dbReference>
<dbReference type="FunFam" id="1.10.455.10:FF:000001">
    <property type="entry name" value="30S ribosomal protein S7"/>
    <property type="match status" value="1"/>
</dbReference>
<dbReference type="Gene3D" id="1.10.455.10">
    <property type="entry name" value="Ribosomal protein S7 domain"/>
    <property type="match status" value="1"/>
</dbReference>
<dbReference type="HAMAP" id="MF_00480_B">
    <property type="entry name" value="Ribosomal_uS7_B"/>
    <property type="match status" value="1"/>
</dbReference>
<dbReference type="InterPro" id="IPR000235">
    <property type="entry name" value="Ribosomal_uS7"/>
</dbReference>
<dbReference type="InterPro" id="IPR005717">
    <property type="entry name" value="Ribosomal_uS7_bac/org-type"/>
</dbReference>
<dbReference type="InterPro" id="IPR020606">
    <property type="entry name" value="Ribosomal_uS7_CS"/>
</dbReference>
<dbReference type="InterPro" id="IPR023798">
    <property type="entry name" value="Ribosomal_uS7_dom"/>
</dbReference>
<dbReference type="InterPro" id="IPR036823">
    <property type="entry name" value="Ribosomal_uS7_dom_sf"/>
</dbReference>
<dbReference type="NCBIfam" id="TIGR01029">
    <property type="entry name" value="rpsG_bact"/>
    <property type="match status" value="1"/>
</dbReference>
<dbReference type="PANTHER" id="PTHR11205">
    <property type="entry name" value="RIBOSOMAL PROTEIN S7"/>
    <property type="match status" value="1"/>
</dbReference>
<dbReference type="Pfam" id="PF00177">
    <property type="entry name" value="Ribosomal_S7"/>
    <property type="match status" value="1"/>
</dbReference>
<dbReference type="PIRSF" id="PIRSF002122">
    <property type="entry name" value="RPS7p_RPS7a_RPS5e_RPS7o"/>
    <property type="match status" value="1"/>
</dbReference>
<dbReference type="SUPFAM" id="SSF47973">
    <property type="entry name" value="Ribosomal protein S7"/>
    <property type="match status" value="1"/>
</dbReference>
<dbReference type="PROSITE" id="PS00052">
    <property type="entry name" value="RIBOSOMAL_S7"/>
    <property type="match status" value="1"/>
</dbReference>
<accession>Q6FDS7</accession>
<evidence type="ECO:0000255" key="1">
    <source>
        <dbReference type="HAMAP-Rule" id="MF_00480"/>
    </source>
</evidence>
<evidence type="ECO:0000305" key="2"/>
<name>RS7_ACIAD</name>
<protein>
    <recommendedName>
        <fullName evidence="1">Small ribosomal subunit protein uS7</fullName>
    </recommendedName>
    <alternativeName>
        <fullName evidence="2">30S ribosomal protein S7</fullName>
    </alternativeName>
</protein>
<comment type="function">
    <text evidence="1">One of the primary rRNA binding proteins, it binds directly to 16S rRNA where it nucleates assembly of the head domain of the 30S subunit. Is located at the subunit interface close to the decoding center, probably blocks exit of the E-site tRNA.</text>
</comment>
<comment type="subunit">
    <text evidence="1">Part of the 30S ribosomal subunit. Contacts proteins S9 and S11.</text>
</comment>
<comment type="similarity">
    <text evidence="1">Belongs to the universal ribosomal protein uS7 family.</text>
</comment>